<gene>
    <name evidence="1" type="primary">mutL</name>
    <name type="ordered locus">Cag_0145</name>
</gene>
<comment type="function">
    <text evidence="1">This protein is involved in the repair of mismatches in DNA. It is required for dam-dependent methyl-directed DNA mismatch repair. May act as a 'molecular matchmaker', a protein that promotes the formation of a stable complex between two or more DNA-binding proteins in an ATP-dependent manner without itself being part of a final effector complex.</text>
</comment>
<comment type="similarity">
    <text evidence="1">Belongs to the DNA mismatch repair MutL/HexB family.</text>
</comment>
<sequence>MPIITRLPDSVANKISAGEVVQRPASVVKELLENAIDAGATKISVTIKDAGKELIRIADNGVGMNRDDALLCVERFATSKIKSADDLDALHTLGFRGEALASICSVSHFELKTRQADATLGLLFRYDGGSLVEELEVQAEQGTSFSVRNLFYNVPARRKFLKSNATEYHHLFEIVKSFTLAYPEIEWRMVNDDEELFNFKNNDVLERLNFYYGDDFASSLIEVAEQNDYLPIHGYLGKPALQKKRKLEQYFFINRRLVQNRMLLQAVQQAYGDLLVERQTPFVLLFLTIDPSRIDVNVHPAKLEIRFDDERQVRSMFYPVIKRAVQLHDFSTNISVIEPFASASEPFVGSSSQPIFSSTSSQAPRMGGGSRRFDLSDAPERAITKNELYRNYREGAFSSPSVASYDAPSPLQQGGLFALASAEESLFGAQAVHEASENIEAFQLSPLDNIVEHKEVEPKIWQLHNKYLICQIKTGLMIIDQHVAHERVLYERALEVMQQNVPNAQQLLFPQKVEFRAWEYEVFEEIRDDLYRLGFNVRLFGNRTVMIEGVPQDVKSGSEVTILQDMITQYQENATKLKLERRDNLAKSYSCRNAIMTGQKLSMEEMRSLIDNLFATREPYTCPHGRPIIIKLSLDQLDKMFGRK</sequence>
<protein>
    <recommendedName>
        <fullName evidence="1">DNA mismatch repair protein MutL</fullName>
    </recommendedName>
</protein>
<organism>
    <name type="scientific">Chlorobium chlorochromatii (strain CaD3)</name>
    <dbReference type="NCBI Taxonomy" id="340177"/>
    <lineage>
        <taxon>Bacteria</taxon>
        <taxon>Pseudomonadati</taxon>
        <taxon>Chlorobiota</taxon>
        <taxon>Chlorobiia</taxon>
        <taxon>Chlorobiales</taxon>
        <taxon>Chlorobiaceae</taxon>
        <taxon>Chlorobium/Pelodictyon group</taxon>
        <taxon>Chlorobium</taxon>
    </lineage>
</organism>
<accession>Q3AUA2</accession>
<keyword id="KW-0227">DNA damage</keyword>
<keyword id="KW-0234">DNA repair</keyword>
<reference key="1">
    <citation type="submission" date="2005-08" db="EMBL/GenBank/DDBJ databases">
        <title>Complete sequence of Chlorobium chlorochromatii CaD3.</title>
        <authorList>
            <consortium name="US DOE Joint Genome Institute"/>
            <person name="Copeland A."/>
            <person name="Lucas S."/>
            <person name="Lapidus A."/>
            <person name="Barry K."/>
            <person name="Detter J.C."/>
            <person name="Glavina T."/>
            <person name="Hammon N."/>
            <person name="Israni S."/>
            <person name="Pitluck S."/>
            <person name="Bryant D."/>
            <person name="Schmutz J."/>
            <person name="Larimer F."/>
            <person name="Land M."/>
            <person name="Kyrpides N."/>
            <person name="Ivanova N."/>
            <person name="Richardson P."/>
        </authorList>
    </citation>
    <scope>NUCLEOTIDE SEQUENCE [LARGE SCALE GENOMIC DNA]</scope>
    <source>
        <strain>CaD3</strain>
    </source>
</reference>
<evidence type="ECO:0000255" key="1">
    <source>
        <dbReference type="HAMAP-Rule" id="MF_00149"/>
    </source>
</evidence>
<name>MUTL_CHLCH</name>
<feature type="chain" id="PRO_1000010001" description="DNA mismatch repair protein MutL">
    <location>
        <begin position="1"/>
        <end position="644"/>
    </location>
</feature>
<proteinExistence type="inferred from homology"/>
<dbReference type="EMBL" id="CP000108">
    <property type="protein sequence ID" value="ABB27423.1"/>
    <property type="molecule type" value="Genomic_DNA"/>
</dbReference>
<dbReference type="SMR" id="Q3AUA2"/>
<dbReference type="STRING" id="340177.Cag_0145"/>
<dbReference type="KEGG" id="cch:Cag_0145"/>
<dbReference type="eggNOG" id="COG0323">
    <property type="taxonomic scope" value="Bacteria"/>
</dbReference>
<dbReference type="HOGENOM" id="CLU_004131_4_0_10"/>
<dbReference type="OrthoDB" id="9763467at2"/>
<dbReference type="GO" id="GO:0032300">
    <property type="term" value="C:mismatch repair complex"/>
    <property type="evidence" value="ECO:0007669"/>
    <property type="project" value="InterPro"/>
</dbReference>
<dbReference type="GO" id="GO:0005524">
    <property type="term" value="F:ATP binding"/>
    <property type="evidence" value="ECO:0007669"/>
    <property type="project" value="InterPro"/>
</dbReference>
<dbReference type="GO" id="GO:0016887">
    <property type="term" value="F:ATP hydrolysis activity"/>
    <property type="evidence" value="ECO:0007669"/>
    <property type="project" value="InterPro"/>
</dbReference>
<dbReference type="GO" id="GO:0140664">
    <property type="term" value="F:ATP-dependent DNA damage sensor activity"/>
    <property type="evidence" value="ECO:0007669"/>
    <property type="project" value="InterPro"/>
</dbReference>
<dbReference type="GO" id="GO:0030983">
    <property type="term" value="F:mismatched DNA binding"/>
    <property type="evidence" value="ECO:0007669"/>
    <property type="project" value="InterPro"/>
</dbReference>
<dbReference type="GO" id="GO:0006298">
    <property type="term" value="P:mismatch repair"/>
    <property type="evidence" value="ECO:0007669"/>
    <property type="project" value="UniProtKB-UniRule"/>
</dbReference>
<dbReference type="CDD" id="cd16926">
    <property type="entry name" value="HATPase_MutL-MLH-PMS-like"/>
    <property type="match status" value="1"/>
</dbReference>
<dbReference type="CDD" id="cd00782">
    <property type="entry name" value="MutL_Trans"/>
    <property type="match status" value="1"/>
</dbReference>
<dbReference type="FunFam" id="3.30.565.10:FF:000003">
    <property type="entry name" value="DNA mismatch repair endonuclease MutL"/>
    <property type="match status" value="1"/>
</dbReference>
<dbReference type="Gene3D" id="3.30.230.10">
    <property type="match status" value="1"/>
</dbReference>
<dbReference type="Gene3D" id="3.30.565.10">
    <property type="entry name" value="Histidine kinase-like ATPase, C-terminal domain"/>
    <property type="match status" value="1"/>
</dbReference>
<dbReference type="Gene3D" id="3.30.1540.20">
    <property type="entry name" value="MutL, C-terminal domain, dimerisation subdomain"/>
    <property type="match status" value="1"/>
</dbReference>
<dbReference type="Gene3D" id="3.30.1370.100">
    <property type="entry name" value="MutL, C-terminal domain, regulatory subdomain"/>
    <property type="match status" value="1"/>
</dbReference>
<dbReference type="HAMAP" id="MF_00149">
    <property type="entry name" value="DNA_mis_repair"/>
    <property type="match status" value="1"/>
</dbReference>
<dbReference type="InterPro" id="IPR014762">
    <property type="entry name" value="DNA_mismatch_repair_CS"/>
</dbReference>
<dbReference type="InterPro" id="IPR020667">
    <property type="entry name" value="DNA_mismatch_repair_MutL"/>
</dbReference>
<dbReference type="InterPro" id="IPR013507">
    <property type="entry name" value="DNA_mismatch_S5_2-like"/>
</dbReference>
<dbReference type="InterPro" id="IPR036890">
    <property type="entry name" value="HATPase_C_sf"/>
</dbReference>
<dbReference type="InterPro" id="IPR002099">
    <property type="entry name" value="MutL/Mlh/PMS"/>
</dbReference>
<dbReference type="InterPro" id="IPR038973">
    <property type="entry name" value="MutL/Mlh/Pms-like"/>
</dbReference>
<dbReference type="InterPro" id="IPR014790">
    <property type="entry name" value="MutL_C"/>
</dbReference>
<dbReference type="InterPro" id="IPR042120">
    <property type="entry name" value="MutL_C_dimsub"/>
</dbReference>
<dbReference type="InterPro" id="IPR042121">
    <property type="entry name" value="MutL_C_regsub"/>
</dbReference>
<dbReference type="InterPro" id="IPR037198">
    <property type="entry name" value="MutL_C_sf"/>
</dbReference>
<dbReference type="InterPro" id="IPR020568">
    <property type="entry name" value="Ribosomal_Su5_D2-typ_SF"/>
</dbReference>
<dbReference type="InterPro" id="IPR014721">
    <property type="entry name" value="Ribsml_uS5_D2-typ_fold_subgr"/>
</dbReference>
<dbReference type="NCBIfam" id="TIGR00585">
    <property type="entry name" value="mutl"/>
    <property type="match status" value="1"/>
</dbReference>
<dbReference type="PANTHER" id="PTHR10073">
    <property type="entry name" value="DNA MISMATCH REPAIR PROTEIN MLH, PMS, MUTL"/>
    <property type="match status" value="1"/>
</dbReference>
<dbReference type="PANTHER" id="PTHR10073:SF12">
    <property type="entry name" value="DNA MISMATCH REPAIR PROTEIN MLH1"/>
    <property type="match status" value="1"/>
</dbReference>
<dbReference type="Pfam" id="PF01119">
    <property type="entry name" value="DNA_mis_repair"/>
    <property type="match status" value="1"/>
</dbReference>
<dbReference type="Pfam" id="PF13589">
    <property type="entry name" value="HATPase_c_3"/>
    <property type="match status" value="1"/>
</dbReference>
<dbReference type="Pfam" id="PF08676">
    <property type="entry name" value="MutL_C"/>
    <property type="match status" value="1"/>
</dbReference>
<dbReference type="SMART" id="SM01340">
    <property type="entry name" value="DNA_mis_repair"/>
    <property type="match status" value="1"/>
</dbReference>
<dbReference type="SMART" id="SM00853">
    <property type="entry name" value="MutL_C"/>
    <property type="match status" value="1"/>
</dbReference>
<dbReference type="SUPFAM" id="SSF55874">
    <property type="entry name" value="ATPase domain of HSP90 chaperone/DNA topoisomerase II/histidine kinase"/>
    <property type="match status" value="1"/>
</dbReference>
<dbReference type="SUPFAM" id="SSF118116">
    <property type="entry name" value="DNA mismatch repair protein MutL"/>
    <property type="match status" value="1"/>
</dbReference>
<dbReference type="SUPFAM" id="SSF54211">
    <property type="entry name" value="Ribosomal protein S5 domain 2-like"/>
    <property type="match status" value="1"/>
</dbReference>
<dbReference type="PROSITE" id="PS00058">
    <property type="entry name" value="DNA_MISMATCH_REPAIR_1"/>
    <property type="match status" value="1"/>
</dbReference>